<proteinExistence type="evidence at protein level"/>
<keyword id="KW-0002">3D-structure</keyword>
<keyword id="KW-0168">Coated pit</keyword>
<keyword id="KW-0968">Cytoplasmic vesicle</keyword>
<keyword id="KW-0254">Endocytosis</keyword>
<keyword id="KW-0333">Golgi apparatus</keyword>
<keyword id="KW-0472">Membrane</keyword>
<keyword id="KW-1185">Reference proteome</keyword>
<accession>Q9VI75</accession>
<accession>O96528</accession>
<accession>Q8MQM1</accession>
<reference evidence="7" key="1">
    <citation type="journal article" date="1998" name="Neuron">
        <title>Synaptic vesicle size and number are regulated by a clathrin adaptor protein required for endocytosis.</title>
        <authorList>
            <person name="Zhang B."/>
            <person name="Koh Y.H."/>
            <person name="Beckstead R.B."/>
            <person name="Budnik V."/>
            <person name="Ganetzky B."/>
            <person name="Bellen H.J."/>
        </authorList>
    </citation>
    <scope>NUCLEOTIDE SEQUENCE [MRNA]</scope>
    <scope>FUNCTION</scope>
    <scope>SUBCELLULAR LOCATION</scope>
    <scope>TISSUE SPECIFICITY</scope>
    <source>
        <tissue evidence="6">Head</tissue>
    </source>
</reference>
<reference evidence="7" key="2">
    <citation type="journal article" date="2000" name="Science">
        <title>The genome sequence of Drosophila melanogaster.</title>
        <authorList>
            <person name="Adams M.D."/>
            <person name="Celniker S.E."/>
            <person name="Holt R.A."/>
            <person name="Evans C.A."/>
            <person name="Gocayne J.D."/>
            <person name="Amanatides P.G."/>
            <person name="Scherer S.E."/>
            <person name="Li P.W."/>
            <person name="Hoskins R.A."/>
            <person name="Galle R.F."/>
            <person name="George R.A."/>
            <person name="Lewis S.E."/>
            <person name="Richards S."/>
            <person name="Ashburner M."/>
            <person name="Henderson S.N."/>
            <person name="Sutton G.G."/>
            <person name="Wortman J.R."/>
            <person name="Yandell M.D."/>
            <person name="Zhang Q."/>
            <person name="Chen L.X."/>
            <person name="Brandon R.C."/>
            <person name="Rogers Y.-H.C."/>
            <person name="Blazej R.G."/>
            <person name="Champe M."/>
            <person name="Pfeiffer B.D."/>
            <person name="Wan K.H."/>
            <person name="Doyle C."/>
            <person name="Baxter E.G."/>
            <person name="Helt G."/>
            <person name="Nelson C.R."/>
            <person name="Miklos G.L.G."/>
            <person name="Abril J.F."/>
            <person name="Agbayani A."/>
            <person name="An H.-J."/>
            <person name="Andrews-Pfannkoch C."/>
            <person name="Baldwin D."/>
            <person name="Ballew R.M."/>
            <person name="Basu A."/>
            <person name="Baxendale J."/>
            <person name="Bayraktaroglu L."/>
            <person name="Beasley E.M."/>
            <person name="Beeson K.Y."/>
            <person name="Benos P.V."/>
            <person name="Berman B.P."/>
            <person name="Bhandari D."/>
            <person name="Bolshakov S."/>
            <person name="Borkova D."/>
            <person name="Botchan M.R."/>
            <person name="Bouck J."/>
            <person name="Brokstein P."/>
            <person name="Brottier P."/>
            <person name="Burtis K.C."/>
            <person name="Busam D.A."/>
            <person name="Butler H."/>
            <person name="Cadieu E."/>
            <person name="Center A."/>
            <person name="Chandra I."/>
            <person name="Cherry J.M."/>
            <person name="Cawley S."/>
            <person name="Dahlke C."/>
            <person name="Davenport L.B."/>
            <person name="Davies P."/>
            <person name="de Pablos B."/>
            <person name="Delcher A."/>
            <person name="Deng Z."/>
            <person name="Mays A.D."/>
            <person name="Dew I."/>
            <person name="Dietz S.M."/>
            <person name="Dodson K."/>
            <person name="Doup L.E."/>
            <person name="Downes M."/>
            <person name="Dugan-Rocha S."/>
            <person name="Dunkov B.C."/>
            <person name="Dunn P."/>
            <person name="Durbin K.J."/>
            <person name="Evangelista C.C."/>
            <person name="Ferraz C."/>
            <person name="Ferriera S."/>
            <person name="Fleischmann W."/>
            <person name="Fosler C."/>
            <person name="Gabrielian A.E."/>
            <person name="Garg N.S."/>
            <person name="Gelbart W.M."/>
            <person name="Glasser K."/>
            <person name="Glodek A."/>
            <person name="Gong F."/>
            <person name="Gorrell J.H."/>
            <person name="Gu Z."/>
            <person name="Guan P."/>
            <person name="Harris M."/>
            <person name="Harris N.L."/>
            <person name="Harvey D.A."/>
            <person name="Heiman T.J."/>
            <person name="Hernandez J.R."/>
            <person name="Houck J."/>
            <person name="Hostin D."/>
            <person name="Houston K.A."/>
            <person name="Howland T.J."/>
            <person name="Wei M.-H."/>
            <person name="Ibegwam C."/>
            <person name="Jalali M."/>
            <person name="Kalush F."/>
            <person name="Karpen G.H."/>
            <person name="Ke Z."/>
            <person name="Kennison J.A."/>
            <person name="Ketchum K.A."/>
            <person name="Kimmel B.E."/>
            <person name="Kodira C.D."/>
            <person name="Kraft C.L."/>
            <person name="Kravitz S."/>
            <person name="Kulp D."/>
            <person name="Lai Z."/>
            <person name="Lasko P."/>
            <person name="Lei Y."/>
            <person name="Levitsky A.A."/>
            <person name="Li J.H."/>
            <person name="Li Z."/>
            <person name="Liang Y."/>
            <person name="Lin X."/>
            <person name="Liu X."/>
            <person name="Mattei B."/>
            <person name="McIntosh T.C."/>
            <person name="McLeod M.P."/>
            <person name="McPherson D."/>
            <person name="Merkulov G."/>
            <person name="Milshina N.V."/>
            <person name="Mobarry C."/>
            <person name="Morris J."/>
            <person name="Moshrefi A."/>
            <person name="Mount S.M."/>
            <person name="Moy M."/>
            <person name="Murphy B."/>
            <person name="Murphy L."/>
            <person name="Muzny D.M."/>
            <person name="Nelson D.L."/>
            <person name="Nelson D.R."/>
            <person name="Nelson K.A."/>
            <person name="Nixon K."/>
            <person name="Nusskern D.R."/>
            <person name="Pacleb J.M."/>
            <person name="Palazzolo M."/>
            <person name="Pittman G.S."/>
            <person name="Pan S."/>
            <person name="Pollard J."/>
            <person name="Puri V."/>
            <person name="Reese M.G."/>
            <person name="Reinert K."/>
            <person name="Remington K."/>
            <person name="Saunders R.D.C."/>
            <person name="Scheeler F."/>
            <person name="Shen H."/>
            <person name="Shue B.C."/>
            <person name="Siden-Kiamos I."/>
            <person name="Simpson M."/>
            <person name="Skupski M.P."/>
            <person name="Smith T.J."/>
            <person name="Spier E."/>
            <person name="Spradling A.C."/>
            <person name="Stapleton M."/>
            <person name="Strong R."/>
            <person name="Sun E."/>
            <person name="Svirskas R."/>
            <person name="Tector C."/>
            <person name="Turner R."/>
            <person name="Venter E."/>
            <person name="Wang A.H."/>
            <person name="Wang X."/>
            <person name="Wang Z.-Y."/>
            <person name="Wassarman D.A."/>
            <person name="Weinstock G.M."/>
            <person name="Weissenbach J."/>
            <person name="Williams S.M."/>
            <person name="Woodage T."/>
            <person name="Worley K.C."/>
            <person name="Wu D."/>
            <person name="Yang S."/>
            <person name="Yao Q.A."/>
            <person name="Ye J."/>
            <person name="Yeh R.-F."/>
            <person name="Zaveri J.S."/>
            <person name="Zhan M."/>
            <person name="Zhang G."/>
            <person name="Zhao Q."/>
            <person name="Zheng L."/>
            <person name="Zheng X.H."/>
            <person name="Zhong F.N."/>
            <person name="Zhong W."/>
            <person name="Zhou X."/>
            <person name="Zhu S.C."/>
            <person name="Zhu X."/>
            <person name="Smith H.O."/>
            <person name="Gibbs R.A."/>
            <person name="Myers E.W."/>
            <person name="Rubin G.M."/>
            <person name="Venter J.C."/>
        </authorList>
    </citation>
    <scope>NUCLEOTIDE SEQUENCE [LARGE SCALE GENOMIC DNA]</scope>
    <source>
        <strain evidence="4">Berkeley</strain>
    </source>
</reference>
<reference key="3">
    <citation type="journal article" date="2002" name="Genome Biol.">
        <title>Annotation of the Drosophila melanogaster euchromatic genome: a systematic review.</title>
        <authorList>
            <person name="Misra S."/>
            <person name="Crosby M.A."/>
            <person name="Mungall C.J."/>
            <person name="Matthews B.B."/>
            <person name="Campbell K.S."/>
            <person name="Hradecky P."/>
            <person name="Huang Y."/>
            <person name="Kaminker J.S."/>
            <person name="Millburn G.H."/>
            <person name="Prochnik S.E."/>
            <person name="Smith C.D."/>
            <person name="Tupy J.L."/>
            <person name="Whitfield E.J."/>
            <person name="Bayraktaroglu L."/>
            <person name="Berman B.P."/>
            <person name="Bettencourt B.R."/>
            <person name="Celniker S.E."/>
            <person name="de Grey A.D.N.J."/>
            <person name="Drysdale R.A."/>
            <person name="Harris N.L."/>
            <person name="Richter J."/>
            <person name="Russo S."/>
            <person name="Schroeder A.J."/>
            <person name="Shu S.Q."/>
            <person name="Stapleton M."/>
            <person name="Yamada C."/>
            <person name="Ashburner M."/>
            <person name="Gelbart W.M."/>
            <person name="Rubin G.M."/>
            <person name="Lewis S.E."/>
        </authorList>
    </citation>
    <scope>GENOME REANNOTATION</scope>
    <source>
        <strain>Berkeley</strain>
    </source>
</reference>
<reference evidence="7" key="4">
    <citation type="journal article" date="2002" name="Genome Biol.">
        <title>A Drosophila full-length cDNA resource.</title>
        <authorList>
            <person name="Stapleton M."/>
            <person name="Carlson J.W."/>
            <person name="Brokstein P."/>
            <person name="Yu C."/>
            <person name="Champe M."/>
            <person name="George R.A."/>
            <person name="Guarin H."/>
            <person name="Kronmiller B."/>
            <person name="Pacleb J.M."/>
            <person name="Park S."/>
            <person name="Wan K.H."/>
            <person name="Rubin G.M."/>
            <person name="Celniker S.E."/>
        </authorList>
    </citation>
    <scope>NUCLEOTIDE SEQUENCE [LARGE SCALE MRNA]</scope>
    <source>
        <strain evidence="5">Berkeley</strain>
        <tissue evidence="5">Head</tissue>
    </source>
</reference>
<reference evidence="7" key="5">
    <citation type="journal article" date="2001" name="Cell">
        <title>A novel all helix fold of the AP180 amino-terminal domain for phosphoinositide binding and clathrin assembly in synaptic vesicle endocytosis.</title>
        <authorList>
            <person name="Mao Y."/>
            <person name="Chen J."/>
            <person name="Maynard J.A."/>
            <person name="Zhang B."/>
            <person name="Quiocho F.A."/>
        </authorList>
    </citation>
    <scope>X-RAY CRYSTALLOGRAPHY (2.2 ANGSTROMS) OF 4-301</scope>
</reference>
<dbReference type="EMBL" id="AF075247">
    <property type="protein sequence ID" value="AAD08669.1"/>
    <property type="molecule type" value="mRNA"/>
</dbReference>
<dbReference type="EMBL" id="AE014297">
    <property type="protein sequence ID" value="AAF54050.1"/>
    <property type="molecule type" value="Genomic_DNA"/>
</dbReference>
<dbReference type="EMBL" id="AY128498">
    <property type="protein sequence ID" value="AAM75091.1"/>
    <property type="molecule type" value="mRNA"/>
</dbReference>
<dbReference type="RefSeq" id="NP_524252.2">
    <property type="nucleotide sequence ID" value="NM_079528.3"/>
</dbReference>
<dbReference type="PDB" id="1HX8">
    <property type="method" value="X-ray"/>
    <property type="resolution" value="2.20 A"/>
    <property type="chains" value="A/B=1-299"/>
</dbReference>
<dbReference type="PDBsum" id="1HX8"/>
<dbReference type="SMR" id="Q9VI75"/>
<dbReference type="BioGRID" id="66058">
    <property type="interactions" value="20"/>
</dbReference>
<dbReference type="ELM" id="Q9VI75"/>
<dbReference type="FunCoup" id="Q9VI75">
    <property type="interactions" value="1796"/>
</dbReference>
<dbReference type="IntAct" id="Q9VI75">
    <property type="interactions" value="1"/>
</dbReference>
<dbReference type="STRING" id="7227.FBpp0291394"/>
<dbReference type="PaxDb" id="7227-FBpp0291394"/>
<dbReference type="EnsemblMetazoa" id="FBtr0081572">
    <property type="protein sequence ID" value="FBpp0081091"/>
    <property type="gene ID" value="FBgn0086372"/>
</dbReference>
<dbReference type="GeneID" id="40863"/>
<dbReference type="KEGG" id="dme:Dmel_CG2520"/>
<dbReference type="AGR" id="FB:FBgn0086372"/>
<dbReference type="CTD" id="7939"/>
<dbReference type="FlyBase" id="FBgn0086372">
    <property type="gene designation" value="lap"/>
</dbReference>
<dbReference type="VEuPathDB" id="VectorBase:FBgn0086372"/>
<dbReference type="eggNOG" id="KOG0251">
    <property type="taxonomic scope" value="Eukaryota"/>
</dbReference>
<dbReference type="GeneTree" id="ENSGT00950000183068"/>
<dbReference type="HOGENOM" id="CLU_014080_1_1_1"/>
<dbReference type="InParanoid" id="Q9VI75"/>
<dbReference type="OrthoDB" id="44015at2759"/>
<dbReference type="PhylomeDB" id="Q9VI75"/>
<dbReference type="Reactome" id="R-DME-432722">
    <property type="pathway name" value="Golgi Associated Vesicle Biogenesis"/>
</dbReference>
<dbReference type="Reactome" id="R-DME-8856825">
    <property type="pathway name" value="Cargo recognition for clathrin-mediated endocytosis"/>
</dbReference>
<dbReference type="Reactome" id="R-DME-8856828">
    <property type="pathway name" value="Clathrin-mediated endocytosis"/>
</dbReference>
<dbReference type="BioGRID-ORCS" id="40863">
    <property type="hits" value="0 hits in 3 CRISPR screens"/>
</dbReference>
<dbReference type="EvolutionaryTrace" id="Q9VI75"/>
<dbReference type="GenomeRNAi" id="40863"/>
<dbReference type="PRO" id="PR:Q9VI75"/>
<dbReference type="Proteomes" id="UP000000803">
    <property type="component" value="Chromosome 3R"/>
</dbReference>
<dbReference type="Bgee" id="FBgn0086372">
    <property type="expression patterns" value="Expressed in adult abdominal pericardial cell (Drosophila) in dorsal vessel heart and 276 other cell types or tissues"/>
</dbReference>
<dbReference type="ExpressionAtlas" id="Q9VI75">
    <property type="expression patterns" value="baseline and differential"/>
</dbReference>
<dbReference type="GO" id="GO:0005905">
    <property type="term" value="C:clathrin-coated pit"/>
    <property type="evidence" value="ECO:0000314"/>
    <property type="project" value="UniProtKB"/>
</dbReference>
<dbReference type="GO" id="GO:0030136">
    <property type="term" value="C:clathrin-coated vesicle"/>
    <property type="evidence" value="ECO:0000318"/>
    <property type="project" value="GO_Central"/>
</dbReference>
<dbReference type="GO" id="GO:0098894">
    <property type="term" value="C:extrinsic component of presynaptic endocytic zone membrane"/>
    <property type="evidence" value="ECO:0000318"/>
    <property type="project" value="GO_Central"/>
</dbReference>
<dbReference type="GO" id="GO:0005794">
    <property type="term" value="C:Golgi apparatus"/>
    <property type="evidence" value="ECO:0007669"/>
    <property type="project" value="UniProtKB-SubCell"/>
</dbReference>
<dbReference type="GO" id="GO:0008021">
    <property type="term" value="C:synaptic vesicle"/>
    <property type="evidence" value="ECO:0000318"/>
    <property type="project" value="GO_Central"/>
</dbReference>
<dbReference type="GO" id="GO:0005545">
    <property type="term" value="F:1-phosphatidylinositol binding"/>
    <property type="evidence" value="ECO:0000250"/>
    <property type="project" value="UniProtKB"/>
</dbReference>
<dbReference type="GO" id="GO:0030276">
    <property type="term" value="F:clathrin binding"/>
    <property type="evidence" value="ECO:0000250"/>
    <property type="project" value="UniProtKB"/>
</dbReference>
<dbReference type="GO" id="GO:0032050">
    <property type="term" value="F:clathrin heavy chain binding"/>
    <property type="evidence" value="ECO:0000318"/>
    <property type="project" value="GO_Central"/>
</dbReference>
<dbReference type="GO" id="GO:0005546">
    <property type="term" value="F:phosphatidylinositol-4,5-bisphosphate binding"/>
    <property type="evidence" value="ECO:0000318"/>
    <property type="project" value="GO_Central"/>
</dbReference>
<dbReference type="GO" id="GO:0000149">
    <property type="term" value="F:SNARE binding"/>
    <property type="evidence" value="ECO:0000318"/>
    <property type="project" value="GO_Central"/>
</dbReference>
<dbReference type="GO" id="GO:0007268">
    <property type="term" value="P:chemical synaptic transmission"/>
    <property type="evidence" value="ECO:0000315"/>
    <property type="project" value="FlyBase"/>
</dbReference>
<dbReference type="GO" id="GO:0048268">
    <property type="term" value="P:clathrin coat assembly"/>
    <property type="evidence" value="ECO:0007669"/>
    <property type="project" value="InterPro"/>
</dbReference>
<dbReference type="GO" id="GO:0072583">
    <property type="term" value="P:clathrin-dependent endocytosis"/>
    <property type="evidence" value="ECO:0000318"/>
    <property type="project" value="GO_Central"/>
</dbReference>
<dbReference type="GO" id="GO:0150007">
    <property type="term" value="P:clathrin-dependent synaptic vesicle endocytosis"/>
    <property type="evidence" value="ECO:0000315"/>
    <property type="project" value="FlyBase"/>
</dbReference>
<dbReference type="GO" id="GO:0007270">
    <property type="term" value="P:neuron-neuron synaptic transmission"/>
    <property type="evidence" value="ECO:0000315"/>
    <property type="project" value="FlyBase"/>
</dbReference>
<dbReference type="GO" id="GO:0042331">
    <property type="term" value="P:phototaxis"/>
    <property type="evidence" value="ECO:0000315"/>
    <property type="project" value="FlyBase"/>
</dbReference>
<dbReference type="GO" id="GO:2000370">
    <property type="term" value="P:positive regulation of clathrin-dependent endocytosis"/>
    <property type="evidence" value="ECO:0000315"/>
    <property type="project" value="FlyBase"/>
</dbReference>
<dbReference type="GO" id="GO:0006898">
    <property type="term" value="P:receptor-mediated endocytosis"/>
    <property type="evidence" value="ECO:0000314"/>
    <property type="project" value="UniProtKB"/>
</dbReference>
<dbReference type="GO" id="GO:0048489">
    <property type="term" value="P:synaptic vesicle transport"/>
    <property type="evidence" value="ECO:0000315"/>
    <property type="project" value="FlyBase"/>
</dbReference>
<dbReference type="GO" id="GO:0006900">
    <property type="term" value="P:vesicle budding from membrane"/>
    <property type="evidence" value="ECO:0000318"/>
    <property type="project" value="GO_Central"/>
</dbReference>
<dbReference type="CDD" id="cd16985">
    <property type="entry name" value="ANTH_N_AP180"/>
    <property type="match status" value="1"/>
</dbReference>
<dbReference type="DisProt" id="DP02763"/>
<dbReference type="FunFam" id="1.25.40.90:FF:000017">
    <property type="entry name" value="Phosphatidylinositol-binding clathrin assembly protein LAP"/>
    <property type="match status" value="1"/>
</dbReference>
<dbReference type="FunFam" id="1.20.58.150:FF:000001">
    <property type="entry name" value="phosphatidylinositol-binding clathrin assembly protein-like isoform X1"/>
    <property type="match status" value="1"/>
</dbReference>
<dbReference type="Gene3D" id="1.25.40.90">
    <property type="match status" value="1"/>
</dbReference>
<dbReference type="Gene3D" id="1.20.58.150">
    <property type="entry name" value="ANTH domain"/>
    <property type="match status" value="1"/>
</dbReference>
<dbReference type="InterPro" id="IPR011417">
    <property type="entry name" value="ANTH_dom"/>
</dbReference>
<dbReference type="InterPro" id="IPR014712">
    <property type="entry name" value="ANTH_dom_sf"/>
</dbReference>
<dbReference type="InterPro" id="IPR045192">
    <property type="entry name" value="AP180-like"/>
</dbReference>
<dbReference type="InterPro" id="IPR013809">
    <property type="entry name" value="ENTH"/>
</dbReference>
<dbReference type="InterPro" id="IPR008942">
    <property type="entry name" value="ENTH_VHS"/>
</dbReference>
<dbReference type="PANTHER" id="PTHR22951">
    <property type="entry name" value="CLATHRIN ASSEMBLY PROTEIN"/>
    <property type="match status" value="1"/>
</dbReference>
<dbReference type="PANTHER" id="PTHR22951:SF5">
    <property type="entry name" value="PHOSPHATIDYLINOSITOL-BINDING CLATHRIN ASSEMBLY PROTEIN LAP"/>
    <property type="match status" value="1"/>
</dbReference>
<dbReference type="Pfam" id="PF07651">
    <property type="entry name" value="ANTH"/>
    <property type="match status" value="1"/>
</dbReference>
<dbReference type="SMART" id="SM00273">
    <property type="entry name" value="ENTH"/>
    <property type="match status" value="1"/>
</dbReference>
<dbReference type="SUPFAM" id="SSF48464">
    <property type="entry name" value="ENTH/VHS domain"/>
    <property type="match status" value="1"/>
</dbReference>
<dbReference type="SUPFAM" id="SSF89009">
    <property type="entry name" value="GAT-like domain"/>
    <property type="match status" value="1"/>
</dbReference>
<dbReference type="PROSITE" id="PS50942">
    <property type="entry name" value="ENTH"/>
    <property type="match status" value="1"/>
</dbReference>
<sequence>MTMAGQTINDRLLAARHSLAGQGLAKSVCKATTEECIGPKKKHLDYLVHCTNEPNVSIPHLANLLIERSQNANWVVVYKSLITTHHLMAYGNERFMQYLASSNSTFNLSSFLDKGTVQDGGMGVPGGRMGYDMSPFIRRYAKYLNEKSLSYRAMAFDFCKVKRGKEEGSLRSMNAEKLLKTLPVLQAQLDALLEFDCQSNDLSNGVINMSFMLLFRDLIRLFACYNDGIINLLEKYFDMNKKHARDALDLYKKFLVRMDRVGEFLKVAENVGIDKGDIPDLTKAPSSLLDALEQHLATLEGRKVSAANTPTQSSSSAFGTAAASSKFDTTNGIDEQLKAQVLAEEEAAMNQYKSKVSSPTSSGAAGASAALTNPFLSSPPAAQAGQPIVDLFGAASAQPAAAAAATKASDDLLQLGNPFADMFDASGGGAAAVGATGNAGDGTAKYDGGAGSSPFDWGATDDDGGAAQ</sequence>
<feature type="chain" id="PRO_0000187066" description="Phosphatidylinositol-binding clathrin assembly protein LAP">
    <location>
        <begin position="1"/>
        <end position="468"/>
    </location>
</feature>
<feature type="domain" description="ENTH" evidence="2 7">
    <location>
        <begin position="16"/>
        <end position="158"/>
    </location>
</feature>
<feature type="region of interest" description="Disordered" evidence="3">
    <location>
        <begin position="438"/>
        <end position="468"/>
    </location>
</feature>
<feature type="compositionally biased region" description="Acidic residues" evidence="3">
    <location>
        <begin position="459"/>
        <end position="468"/>
    </location>
</feature>
<feature type="sequence conflict" description="In Ref. 1; AAD08669." evidence="7" ref="1">
    <original>T</original>
    <variation>A</variation>
    <location>
        <position position="51"/>
    </location>
</feature>
<feature type="sequence conflict" description="In Ref. 4; AAM75091." evidence="7" ref="4">
    <original>M</original>
    <variation>I</variation>
    <location>
        <position position="209"/>
    </location>
</feature>
<feature type="sequence conflict" description="In Ref. 1; AAD08669 and 4; AAM75091." evidence="7" ref="1 4">
    <original>T</original>
    <variation>A</variation>
    <location>
        <position position="372"/>
    </location>
</feature>
<feature type="helix" evidence="9">
    <location>
        <begin position="24"/>
        <end position="31"/>
    </location>
</feature>
<feature type="strand" evidence="9">
    <location>
        <begin position="34"/>
        <end position="37"/>
    </location>
</feature>
<feature type="helix" evidence="9">
    <location>
        <begin position="41"/>
        <end position="52"/>
    </location>
</feature>
<feature type="helix" evidence="9">
    <location>
        <begin position="58"/>
        <end position="69"/>
    </location>
</feature>
<feature type="helix" evidence="9">
    <location>
        <begin position="74"/>
        <end position="90"/>
    </location>
</feature>
<feature type="helix" evidence="9">
    <location>
        <begin position="93"/>
        <end position="101"/>
    </location>
</feature>
<feature type="helix" evidence="9">
    <location>
        <begin position="129"/>
        <end position="154"/>
    </location>
</feature>
<feature type="helix" evidence="9">
    <location>
        <begin position="158"/>
        <end position="160"/>
    </location>
</feature>
<feature type="turn" evidence="9">
    <location>
        <begin position="170"/>
        <end position="172"/>
    </location>
</feature>
<feature type="helix" evidence="9">
    <location>
        <begin position="175"/>
        <end position="193"/>
    </location>
</feature>
<feature type="helix" evidence="9">
    <location>
        <begin position="199"/>
        <end position="201"/>
    </location>
</feature>
<feature type="helix" evidence="9">
    <location>
        <begin position="205"/>
        <end position="236"/>
    </location>
</feature>
<feature type="helix" evidence="9">
    <location>
        <begin position="242"/>
        <end position="270"/>
    </location>
</feature>
<feature type="helix" evidence="9">
    <location>
        <begin position="275"/>
        <end position="277"/>
    </location>
</feature>
<feature type="helix" evidence="9">
    <location>
        <begin position="286"/>
        <end position="297"/>
    </location>
</feature>
<name>PICAL_DROME</name>
<comment type="function">
    <text evidence="6">Assembly protein recruiting clathrin and adaptor protein complex 2 (AP2) to cell membranes at sites of coated-pit formation and clathrin-vesicle assembly. May be required to determine the amount of membrane to be recycled, possibly by regulating the size of the clathrin cage. Involved in AP2-dependent clathrin-mediated endocytosis at the neuromuscular junction.</text>
</comment>
<comment type="subunit">
    <text evidence="1">Binds clathrin and phosphatidylinositol 4,5-bisphosphate.</text>
</comment>
<comment type="subcellular location">
    <subcellularLocation>
        <location evidence="6">Membrane</location>
        <location evidence="6">Clathrin-coated pit</location>
    </subcellularLocation>
    <subcellularLocation>
        <location evidence="6">Golgi apparatus</location>
    </subcellularLocation>
    <subcellularLocation>
        <location evidence="6">Cytoplasmic vesicle</location>
        <location evidence="6">Clathrin-coated vesicle</location>
    </subcellularLocation>
    <text>Colocalized with clathrin in the Golgi area.</text>
</comment>
<comment type="tissue specificity">
    <text evidence="6">In embryos, expression is seen in central and peripheral nervous systems (brain and ventral nerve cord) and Garland cells. Coexpressed with clathrin at presynaptic boutons of neuromuscular junctions.</text>
</comment>
<comment type="similarity">
    <text evidence="7">Belongs to the PICALM/SNAP91 family.</text>
</comment>
<protein>
    <recommendedName>
        <fullName>Phosphatidylinositol-binding clathrin assembly protein LAP</fullName>
    </recommendedName>
    <alternativeName>
        <fullName>Like-AP180</fullName>
    </alternativeName>
</protein>
<gene>
    <name type="primary">lap</name>
    <name type="ORF">CG2520</name>
</gene>
<organism evidence="8">
    <name type="scientific">Drosophila melanogaster</name>
    <name type="common">Fruit fly</name>
    <dbReference type="NCBI Taxonomy" id="7227"/>
    <lineage>
        <taxon>Eukaryota</taxon>
        <taxon>Metazoa</taxon>
        <taxon>Ecdysozoa</taxon>
        <taxon>Arthropoda</taxon>
        <taxon>Hexapoda</taxon>
        <taxon>Insecta</taxon>
        <taxon>Pterygota</taxon>
        <taxon>Neoptera</taxon>
        <taxon>Endopterygota</taxon>
        <taxon>Diptera</taxon>
        <taxon>Brachycera</taxon>
        <taxon>Muscomorpha</taxon>
        <taxon>Ephydroidea</taxon>
        <taxon>Drosophilidae</taxon>
        <taxon>Drosophila</taxon>
        <taxon>Sophophora</taxon>
    </lineage>
</organism>
<evidence type="ECO:0000250" key="1"/>
<evidence type="ECO:0000255" key="2">
    <source>
        <dbReference type="PROSITE-ProRule" id="PRU00243"/>
    </source>
</evidence>
<evidence type="ECO:0000256" key="3">
    <source>
        <dbReference type="SAM" id="MobiDB-lite"/>
    </source>
</evidence>
<evidence type="ECO:0000269" key="4">
    <source>
    </source>
</evidence>
<evidence type="ECO:0000269" key="5">
    <source>
    </source>
</evidence>
<evidence type="ECO:0000269" key="6">
    <source>
    </source>
</evidence>
<evidence type="ECO:0000305" key="7"/>
<evidence type="ECO:0000312" key="8">
    <source>
        <dbReference type="EMBL" id="AAM75091.1"/>
    </source>
</evidence>
<evidence type="ECO:0007829" key="9">
    <source>
        <dbReference type="PDB" id="1HX8"/>
    </source>
</evidence>